<protein>
    <recommendedName>
        <fullName>Coiled-coil domain-containing protein 149-B</fullName>
    </recommendedName>
</protein>
<evidence type="ECO:0000255" key="1"/>
<evidence type="ECO:0000256" key="2">
    <source>
        <dbReference type="SAM" id="MobiDB-lite"/>
    </source>
</evidence>
<evidence type="ECO:0000305" key="3"/>
<feature type="chain" id="PRO_0000344210" description="Coiled-coil domain-containing protein 149-B">
    <location>
        <begin position="1"/>
        <end position="522"/>
    </location>
</feature>
<feature type="region of interest" description="Disordered" evidence="2">
    <location>
        <begin position="413"/>
        <end position="522"/>
    </location>
</feature>
<feature type="coiled-coil region" evidence="1">
    <location>
        <begin position="1"/>
        <end position="196"/>
    </location>
</feature>
<feature type="coiled-coil region" evidence="1">
    <location>
        <begin position="260"/>
        <end position="287"/>
    </location>
</feature>
<feature type="compositionally biased region" description="Polar residues" evidence="2">
    <location>
        <begin position="429"/>
        <end position="438"/>
    </location>
</feature>
<feature type="compositionally biased region" description="Polar residues" evidence="2">
    <location>
        <begin position="467"/>
        <end position="490"/>
    </location>
</feature>
<feature type="compositionally biased region" description="Polar residues" evidence="2">
    <location>
        <begin position="503"/>
        <end position="522"/>
    </location>
</feature>
<dbReference type="EMBL" id="BC076093">
    <property type="protein sequence ID" value="AAH76093.1"/>
    <property type="molecule type" value="mRNA"/>
</dbReference>
<dbReference type="RefSeq" id="NP_001002710.1">
    <property type="nucleotide sequence ID" value="NM_001002710.1"/>
</dbReference>
<dbReference type="SMR" id="Q6DH86"/>
<dbReference type="FunCoup" id="Q6DH86">
    <property type="interactions" value="476"/>
</dbReference>
<dbReference type="PaxDb" id="7955-ENSDARP00000107549"/>
<dbReference type="GeneID" id="436983"/>
<dbReference type="KEGG" id="dre:436983"/>
<dbReference type="AGR" id="ZFIN:ZDB-GENE-040718-465"/>
<dbReference type="CTD" id="436983"/>
<dbReference type="ZFIN" id="ZDB-GENE-040718-465">
    <property type="gene designation" value="ccdc149b"/>
</dbReference>
<dbReference type="eggNOG" id="KOG4687">
    <property type="taxonomic scope" value="Eukaryota"/>
</dbReference>
<dbReference type="InParanoid" id="Q6DH86"/>
<dbReference type="OrthoDB" id="5917629at2759"/>
<dbReference type="PhylomeDB" id="Q6DH86"/>
<dbReference type="PRO" id="PR:Q6DH86"/>
<dbReference type="Proteomes" id="UP000000437">
    <property type="component" value="Alternate scaffold 1"/>
</dbReference>
<dbReference type="Proteomes" id="UP000000437">
    <property type="component" value="Chromosome 1"/>
</dbReference>
<dbReference type="InterPro" id="IPR019179">
    <property type="entry name" value="Coiled-coil_dom-contain_pr_149"/>
</dbReference>
<dbReference type="PANTHER" id="PTHR21682">
    <property type="entry name" value="COILED-COIL DOMAIN-CONTAINING PROTEIN 149"/>
    <property type="match status" value="1"/>
</dbReference>
<dbReference type="PANTHER" id="PTHR21682:SF2">
    <property type="entry name" value="COILED-COIL DOMAIN-CONTAINING PROTEIN 149"/>
    <property type="match status" value="1"/>
</dbReference>
<dbReference type="Pfam" id="PF09789">
    <property type="entry name" value="CC149"/>
    <property type="match status" value="1"/>
</dbReference>
<sequence>MANQLRERHQGLKKKYRELIDGDPSLPPEKRNQVNLAQLLRDSREHNKQLSEELKELKQRLAEVHGDNKLLRMTIAKQRLGDEEVGTRHFPAHEREDLVQQLERAREQTEALEQSLKAATDELQDVRAERNVYQEKAHRLNLEINHILGSHENRILDIDALCMENRYLHERLMQLQEEVSLLKSNVMKYKSALESKKNCKVYGKSNSSALTGVLSAKQVQELLLSEENGCSLPVTSQSISDLKSLATALLETIHEKNMVIRHQRQTNKILGNRVAELERKLKTLEVSGLWSLPGITYNVSLGLGRRKAVIVLSDSQHVQSTTEQSVHLTPEAMVADEEIVTGEEVTEDTGLSADFSQDECQAGAVELNQNSDYFTHTYSVSATPQVSTPAENIQPVESMQSKTLALCDSERSACTAERSEQHDEDLQSGGHQSMSTEASLKALEEQAVENDNFSGDCESQGALEDSQPVTSETSGSFDCISGSESCTAEQQTERSIEEETEHASLNTSPPEQTSPHQECPSS</sequence>
<organism>
    <name type="scientific">Danio rerio</name>
    <name type="common">Zebrafish</name>
    <name type="synonym">Brachydanio rerio</name>
    <dbReference type="NCBI Taxonomy" id="7955"/>
    <lineage>
        <taxon>Eukaryota</taxon>
        <taxon>Metazoa</taxon>
        <taxon>Chordata</taxon>
        <taxon>Craniata</taxon>
        <taxon>Vertebrata</taxon>
        <taxon>Euteleostomi</taxon>
        <taxon>Actinopterygii</taxon>
        <taxon>Neopterygii</taxon>
        <taxon>Teleostei</taxon>
        <taxon>Ostariophysi</taxon>
        <taxon>Cypriniformes</taxon>
        <taxon>Danionidae</taxon>
        <taxon>Danioninae</taxon>
        <taxon>Danio</taxon>
    </lineage>
</organism>
<reference key="1">
    <citation type="submission" date="2004-07" db="EMBL/GenBank/DDBJ databases">
        <authorList>
            <consortium name="NIH - Zebrafish Gene Collection (ZGC) project"/>
        </authorList>
    </citation>
    <scope>NUCLEOTIDE SEQUENCE [LARGE SCALE MRNA]</scope>
    <source>
        <tissue>Brain</tissue>
    </source>
</reference>
<keyword id="KW-0175">Coiled coil</keyword>
<keyword id="KW-1185">Reference proteome</keyword>
<comment type="similarity">
    <text evidence="3">Belongs to the CCDC149 family.</text>
</comment>
<gene>
    <name type="primary">ccdc149b</name>
    <name type="synonym">ccdc149</name>
    <name type="ORF">zgc:92601</name>
</gene>
<name>C149B_DANRE</name>
<proteinExistence type="evidence at transcript level"/>
<accession>Q6DH86</accession>